<name>RL22_YERPP</name>
<accession>A4TGZ7</accession>
<feature type="chain" id="PRO_1000052677" description="Large ribosomal subunit protein uL22">
    <location>
        <begin position="1"/>
        <end position="110"/>
    </location>
</feature>
<sequence length="110" mass="12186">METIAKHRHARSSAQKVRLVADLIRGKKVSQALETLTYTNKKAAGLVKKVLESAIANAEHNDGADIDDLKVTKIFVDEGPSMKRIMPRAKGRADRILKRTSHITVVVSDR</sequence>
<organism>
    <name type="scientific">Yersinia pestis (strain Pestoides F)</name>
    <dbReference type="NCBI Taxonomy" id="386656"/>
    <lineage>
        <taxon>Bacteria</taxon>
        <taxon>Pseudomonadati</taxon>
        <taxon>Pseudomonadota</taxon>
        <taxon>Gammaproteobacteria</taxon>
        <taxon>Enterobacterales</taxon>
        <taxon>Yersiniaceae</taxon>
        <taxon>Yersinia</taxon>
    </lineage>
</organism>
<reference key="1">
    <citation type="submission" date="2007-02" db="EMBL/GenBank/DDBJ databases">
        <title>Complete sequence of chromosome of Yersinia pestis Pestoides F.</title>
        <authorList>
            <consortium name="US DOE Joint Genome Institute"/>
            <person name="Copeland A."/>
            <person name="Lucas S."/>
            <person name="Lapidus A."/>
            <person name="Barry K."/>
            <person name="Detter J.C."/>
            <person name="Glavina del Rio T."/>
            <person name="Hammon N."/>
            <person name="Israni S."/>
            <person name="Dalin E."/>
            <person name="Tice H."/>
            <person name="Pitluck S."/>
            <person name="Di Bartolo G."/>
            <person name="Chain P."/>
            <person name="Malfatti S."/>
            <person name="Shin M."/>
            <person name="Vergez L."/>
            <person name="Schmutz J."/>
            <person name="Larimer F."/>
            <person name="Land M."/>
            <person name="Hauser L."/>
            <person name="Worsham P."/>
            <person name="Chu M."/>
            <person name="Bearden S."/>
            <person name="Garcia E."/>
            <person name="Richardson P."/>
        </authorList>
    </citation>
    <scope>NUCLEOTIDE SEQUENCE [LARGE SCALE GENOMIC DNA]</scope>
    <source>
        <strain>Pestoides F</strain>
    </source>
</reference>
<proteinExistence type="inferred from homology"/>
<keyword id="KW-0687">Ribonucleoprotein</keyword>
<keyword id="KW-0689">Ribosomal protein</keyword>
<keyword id="KW-0694">RNA-binding</keyword>
<keyword id="KW-0699">rRNA-binding</keyword>
<evidence type="ECO:0000255" key="1">
    <source>
        <dbReference type="HAMAP-Rule" id="MF_01331"/>
    </source>
</evidence>
<evidence type="ECO:0000305" key="2"/>
<dbReference type="EMBL" id="CP000668">
    <property type="protein sequence ID" value="ABP38560.1"/>
    <property type="molecule type" value="Genomic_DNA"/>
</dbReference>
<dbReference type="RefSeq" id="WP_002223844.1">
    <property type="nucleotide sequence ID" value="NZ_CP009715.1"/>
</dbReference>
<dbReference type="SMR" id="A4TGZ7"/>
<dbReference type="GeneID" id="98190601"/>
<dbReference type="KEGG" id="ypp:YPDSF_0138"/>
<dbReference type="PATRIC" id="fig|386656.14.peg.429"/>
<dbReference type="GO" id="GO:0022625">
    <property type="term" value="C:cytosolic large ribosomal subunit"/>
    <property type="evidence" value="ECO:0007669"/>
    <property type="project" value="TreeGrafter"/>
</dbReference>
<dbReference type="GO" id="GO:0019843">
    <property type="term" value="F:rRNA binding"/>
    <property type="evidence" value="ECO:0007669"/>
    <property type="project" value="UniProtKB-UniRule"/>
</dbReference>
<dbReference type="GO" id="GO:0003735">
    <property type="term" value="F:structural constituent of ribosome"/>
    <property type="evidence" value="ECO:0007669"/>
    <property type="project" value="InterPro"/>
</dbReference>
<dbReference type="GO" id="GO:0006412">
    <property type="term" value="P:translation"/>
    <property type="evidence" value="ECO:0007669"/>
    <property type="project" value="UniProtKB-UniRule"/>
</dbReference>
<dbReference type="CDD" id="cd00336">
    <property type="entry name" value="Ribosomal_L22"/>
    <property type="match status" value="1"/>
</dbReference>
<dbReference type="FunFam" id="3.90.470.10:FF:000001">
    <property type="entry name" value="50S ribosomal protein L22"/>
    <property type="match status" value="1"/>
</dbReference>
<dbReference type="Gene3D" id="3.90.470.10">
    <property type="entry name" value="Ribosomal protein L22/L17"/>
    <property type="match status" value="1"/>
</dbReference>
<dbReference type="HAMAP" id="MF_01331_B">
    <property type="entry name" value="Ribosomal_uL22_B"/>
    <property type="match status" value="1"/>
</dbReference>
<dbReference type="InterPro" id="IPR001063">
    <property type="entry name" value="Ribosomal_uL22"/>
</dbReference>
<dbReference type="InterPro" id="IPR005727">
    <property type="entry name" value="Ribosomal_uL22_bac/chlpt-type"/>
</dbReference>
<dbReference type="InterPro" id="IPR047867">
    <property type="entry name" value="Ribosomal_uL22_bac/org-type"/>
</dbReference>
<dbReference type="InterPro" id="IPR018260">
    <property type="entry name" value="Ribosomal_uL22_CS"/>
</dbReference>
<dbReference type="InterPro" id="IPR036394">
    <property type="entry name" value="Ribosomal_uL22_sf"/>
</dbReference>
<dbReference type="NCBIfam" id="TIGR01044">
    <property type="entry name" value="rplV_bact"/>
    <property type="match status" value="1"/>
</dbReference>
<dbReference type="PANTHER" id="PTHR13501">
    <property type="entry name" value="CHLOROPLAST 50S RIBOSOMAL PROTEIN L22-RELATED"/>
    <property type="match status" value="1"/>
</dbReference>
<dbReference type="PANTHER" id="PTHR13501:SF8">
    <property type="entry name" value="LARGE RIBOSOMAL SUBUNIT PROTEIN UL22M"/>
    <property type="match status" value="1"/>
</dbReference>
<dbReference type="Pfam" id="PF00237">
    <property type="entry name" value="Ribosomal_L22"/>
    <property type="match status" value="1"/>
</dbReference>
<dbReference type="SUPFAM" id="SSF54843">
    <property type="entry name" value="Ribosomal protein L22"/>
    <property type="match status" value="1"/>
</dbReference>
<dbReference type="PROSITE" id="PS00464">
    <property type="entry name" value="RIBOSOMAL_L22"/>
    <property type="match status" value="1"/>
</dbReference>
<comment type="function">
    <text evidence="1">This protein binds specifically to 23S rRNA; its binding is stimulated by other ribosomal proteins, e.g. L4, L17, and L20. It is important during the early stages of 50S assembly. It makes multiple contacts with different domains of the 23S rRNA in the assembled 50S subunit and ribosome (By similarity).</text>
</comment>
<comment type="function">
    <text evidence="1">The globular domain of the protein is located near the polypeptide exit tunnel on the outside of the subunit, while an extended beta-hairpin is found that lines the wall of the exit tunnel in the center of the 70S ribosome.</text>
</comment>
<comment type="subunit">
    <text evidence="1">Part of the 50S ribosomal subunit.</text>
</comment>
<comment type="similarity">
    <text evidence="1">Belongs to the universal ribosomal protein uL22 family.</text>
</comment>
<protein>
    <recommendedName>
        <fullName evidence="1">Large ribosomal subunit protein uL22</fullName>
    </recommendedName>
    <alternativeName>
        <fullName evidence="2">50S ribosomal protein L22</fullName>
    </alternativeName>
</protein>
<gene>
    <name evidence="1" type="primary">rplV</name>
    <name type="ordered locus">YPDSF_0138</name>
</gene>